<accession>C3MK60</accession>
<reference key="1">
    <citation type="journal article" date="2009" name="Proc. Natl. Acad. Sci. U.S.A.">
        <title>Biogeography of the Sulfolobus islandicus pan-genome.</title>
        <authorList>
            <person name="Reno M.L."/>
            <person name="Held N.L."/>
            <person name="Fields C.J."/>
            <person name="Burke P.V."/>
            <person name="Whitaker R.J."/>
        </authorList>
    </citation>
    <scope>NUCLEOTIDE SEQUENCE [LARGE SCALE GENOMIC DNA]</scope>
    <source>
        <strain>L.S.2.15 / Lassen #1</strain>
    </source>
</reference>
<name>IF1A_SACI2</name>
<comment type="function">
    <text evidence="1">Seems to be required for maximal rate of protein biosynthesis. Enhances ribosome dissociation into subunits and stabilizes the binding of the initiator Met-tRNA(I) to 40 S ribosomal subunits.</text>
</comment>
<comment type="similarity">
    <text evidence="1">Belongs to the eIF-1A family.</text>
</comment>
<keyword id="KW-0396">Initiation factor</keyword>
<keyword id="KW-0648">Protein biosynthesis</keyword>
<proteinExistence type="inferred from homology"/>
<sequence length="108" mass="12476">MPKKDRAQEAPSRDVPKPEEGQTICVVKKMLGGDHLVVLCMDGKERLARIPGKIRKKMWMREGDVVLVGIWDFQPNRCDILYKYGNDEIKRLVNENIISREVIDQLRG</sequence>
<evidence type="ECO:0000255" key="1">
    <source>
        <dbReference type="HAMAP-Rule" id="MF_00216"/>
    </source>
</evidence>
<protein>
    <recommendedName>
        <fullName evidence="1">Translation initiation factor 1A</fullName>
        <shortName evidence="1">aIF-1A</shortName>
    </recommendedName>
</protein>
<dbReference type="EMBL" id="CP001399">
    <property type="protein sequence ID" value="ACP34358.1"/>
    <property type="molecule type" value="Genomic_DNA"/>
</dbReference>
<dbReference type="RefSeq" id="WP_012710350.1">
    <property type="nucleotide sequence ID" value="NC_012589.1"/>
</dbReference>
<dbReference type="SMR" id="C3MK60"/>
<dbReference type="KEGG" id="sis:LS215_0203"/>
<dbReference type="HOGENOM" id="CLU_109098_1_2_2"/>
<dbReference type="OrthoDB" id="2586at2157"/>
<dbReference type="Proteomes" id="UP000001747">
    <property type="component" value="Chromosome"/>
</dbReference>
<dbReference type="GO" id="GO:0003723">
    <property type="term" value="F:RNA binding"/>
    <property type="evidence" value="ECO:0007669"/>
    <property type="project" value="InterPro"/>
</dbReference>
<dbReference type="GO" id="GO:0003743">
    <property type="term" value="F:translation initiation factor activity"/>
    <property type="evidence" value="ECO:0007669"/>
    <property type="project" value="UniProtKB-UniRule"/>
</dbReference>
<dbReference type="CDD" id="cd05793">
    <property type="entry name" value="S1_IF1A"/>
    <property type="match status" value="1"/>
</dbReference>
<dbReference type="Gene3D" id="2.40.50.140">
    <property type="entry name" value="Nucleic acid-binding proteins"/>
    <property type="match status" value="1"/>
</dbReference>
<dbReference type="HAMAP" id="MF_00216">
    <property type="entry name" value="aIF_1A"/>
    <property type="match status" value="1"/>
</dbReference>
<dbReference type="InterPro" id="IPR012340">
    <property type="entry name" value="NA-bd_OB-fold"/>
</dbReference>
<dbReference type="InterPro" id="IPR006196">
    <property type="entry name" value="RNA-binding_domain_S1_IF1"/>
</dbReference>
<dbReference type="InterPro" id="IPR001253">
    <property type="entry name" value="TIF_eIF-1A"/>
</dbReference>
<dbReference type="InterPro" id="IPR018104">
    <property type="entry name" value="TIF_eIF-1A_CS"/>
</dbReference>
<dbReference type="NCBIfam" id="TIGR00523">
    <property type="entry name" value="eIF-1A"/>
    <property type="match status" value="1"/>
</dbReference>
<dbReference type="NCBIfam" id="NF003082">
    <property type="entry name" value="PRK04012.1-1"/>
    <property type="match status" value="1"/>
</dbReference>
<dbReference type="NCBIfam" id="NF003084">
    <property type="entry name" value="PRK04012.1-3"/>
    <property type="match status" value="1"/>
</dbReference>
<dbReference type="NCBIfam" id="NF003085">
    <property type="entry name" value="PRK04012.1-5"/>
    <property type="match status" value="1"/>
</dbReference>
<dbReference type="PANTHER" id="PTHR21668">
    <property type="entry name" value="EIF-1A"/>
    <property type="match status" value="1"/>
</dbReference>
<dbReference type="Pfam" id="PF01176">
    <property type="entry name" value="eIF-1a"/>
    <property type="match status" value="1"/>
</dbReference>
<dbReference type="SMART" id="SM00652">
    <property type="entry name" value="eIF1a"/>
    <property type="match status" value="1"/>
</dbReference>
<dbReference type="SUPFAM" id="SSF50249">
    <property type="entry name" value="Nucleic acid-binding proteins"/>
    <property type="match status" value="1"/>
</dbReference>
<dbReference type="PROSITE" id="PS01262">
    <property type="entry name" value="IF1A"/>
    <property type="match status" value="1"/>
</dbReference>
<dbReference type="PROSITE" id="PS50832">
    <property type="entry name" value="S1_IF1_TYPE"/>
    <property type="match status" value="1"/>
</dbReference>
<gene>
    <name type="primary">eIF1A</name>
    <name type="ordered locus">LS215_0203</name>
</gene>
<feature type="chain" id="PRO_1000204223" description="Translation initiation factor 1A">
    <location>
        <begin position="1"/>
        <end position="108"/>
    </location>
</feature>
<feature type="domain" description="S1-like" evidence="1">
    <location>
        <begin position="11"/>
        <end position="85"/>
    </location>
</feature>
<organism>
    <name type="scientific">Saccharolobus islandicus (strain L.S.2.15 / Lassen #1)</name>
    <name type="common">Sulfolobus islandicus</name>
    <dbReference type="NCBI Taxonomy" id="429572"/>
    <lineage>
        <taxon>Archaea</taxon>
        <taxon>Thermoproteota</taxon>
        <taxon>Thermoprotei</taxon>
        <taxon>Sulfolobales</taxon>
        <taxon>Sulfolobaceae</taxon>
        <taxon>Saccharolobus</taxon>
    </lineage>
</organism>